<proteinExistence type="evidence at protein level"/>
<feature type="chain" id="PRO_0000442207" description="Coiled-coil domain-containing protein mdt-28" evidence="5">
    <location>
        <begin position="1"/>
        <end position="202"/>
    </location>
</feature>
<feature type="region of interest" description="Disordered" evidence="2">
    <location>
        <begin position="1"/>
        <end position="83"/>
    </location>
</feature>
<feature type="coiled-coil region" evidence="1">
    <location>
        <begin position="159"/>
        <end position="184"/>
    </location>
</feature>
<feature type="compositionally biased region" description="Acidic residues" evidence="2">
    <location>
        <begin position="1"/>
        <end position="15"/>
    </location>
</feature>
<feature type="compositionally biased region" description="Acidic residues" evidence="2">
    <location>
        <begin position="28"/>
        <end position="45"/>
    </location>
</feature>
<feature type="splice variant" id="VSP_059205" description="In isoform a." evidence="5">
    <location>
        <begin position="20"/>
        <end position="21"/>
    </location>
</feature>
<dbReference type="EMBL" id="BX284605">
    <property type="protein sequence ID" value="CAB03011.1"/>
    <property type="molecule type" value="Genomic_DNA"/>
</dbReference>
<dbReference type="EMBL" id="BX284605">
    <property type="protein sequence ID" value="CCG28159.1"/>
    <property type="molecule type" value="Genomic_DNA"/>
</dbReference>
<dbReference type="PIR" id="T21506">
    <property type="entry name" value="T21506"/>
</dbReference>
<dbReference type="RefSeq" id="NP_001256673.1">
    <molecule id="H9G301-2"/>
    <property type="nucleotide sequence ID" value="NM_001269744.2"/>
</dbReference>
<dbReference type="RefSeq" id="NP_001256674.1">
    <property type="nucleotide sequence ID" value="NM_001269745.1"/>
</dbReference>
<dbReference type="RefSeq" id="NP_001380113.1">
    <molecule id="H9G301-1"/>
    <property type="nucleotide sequence ID" value="NM_001392672.1"/>
</dbReference>
<dbReference type="SMR" id="H9G301"/>
<dbReference type="FunCoup" id="H9G301">
    <property type="interactions" value="154"/>
</dbReference>
<dbReference type="IntAct" id="H9G301">
    <property type="interactions" value="1"/>
</dbReference>
<dbReference type="STRING" id="6239.F28F8.5b.1"/>
<dbReference type="PaxDb" id="6239-F28F8.5b"/>
<dbReference type="EnsemblMetazoa" id="F28F8.5a.1">
    <molecule id="H9G301-2"/>
    <property type="protein sequence ID" value="F28F8.5a.1"/>
    <property type="gene ID" value="WBGene00009223"/>
</dbReference>
<dbReference type="EnsemblMetazoa" id="F28F8.5b.1">
    <molecule id="H9G301-1"/>
    <property type="protein sequence ID" value="F28F8.5b.1"/>
    <property type="gene ID" value="WBGene00009223"/>
</dbReference>
<dbReference type="GeneID" id="180048"/>
<dbReference type="KEGG" id="cel:CELE_F28F8.5"/>
<dbReference type="UCSC" id="F28F8.5">
    <property type="organism name" value="c. elegans"/>
</dbReference>
<dbReference type="AGR" id="WB:WBGene00009223"/>
<dbReference type="CTD" id="180048"/>
<dbReference type="WormBase" id="F28F8.5a">
    <molecule id="H9G301-2"/>
    <property type="protein sequence ID" value="CE09759"/>
    <property type="gene ID" value="WBGene00009223"/>
    <property type="gene designation" value="mdt-28"/>
</dbReference>
<dbReference type="WormBase" id="F28F8.5b">
    <molecule id="H9G301-1"/>
    <property type="protein sequence ID" value="CE47319"/>
    <property type="gene ID" value="WBGene00009223"/>
    <property type="gene designation" value="mdt-28"/>
</dbReference>
<dbReference type="eggNOG" id="ENOG502SD7Z">
    <property type="taxonomic scope" value="Eukaryota"/>
</dbReference>
<dbReference type="InParanoid" id="H9G301"/>
<dbReference type="OMA" id="IDSLMMH"/>
<dbReference type="OrthoDB" id="5799706at2759"/>
<dbReference type="PRO" id="PR:H9G301"/>
<dbReference type="Proteomes" id="UP000001940">
    <property type="component" value="Chromosome V"/>
</dbReference>
<dbReference type="Bgee" id="WBGene00009223">
    <property type="expression patterns" value="Expressed in germ line (C elegans) and 4 other cell types or tissues"/>
</dbReference>
<dbReference type="GO" id="GO:0005737">
    <property type="term" value="C:cytoplasm"/>
    <property type="evidence" value="ECO:0007669"/>
    <property type="project" value="UniProtKB-SubCell"/>
</dbReference>
<dbReference type="GO" id="GO:0005634">
    <property type="term" value="C:nucleus"/>
    <property type="evidence" value="ECO:0007669"/>
    <property type="project" value="UniProtKB-SubCell"/>
</dbReference>
<organism evidence="6">
    <name type="scientific">Caenorhabditis elegans</name>
    <dbReference type="NCBI Taxonomy" id="6239"/>
    <lineage>
        <taxon>Eukaryota</taxon>
        <taxon>Metazoa</taxon>
        <taxon>Ecdysozoa</taxon>
        <taxon>Nematoda</taxon>
        <taxon>Chromadorea</taxon>
        <taxon>Rhabditida</taxon>
        <taxon>Rhabditina</taxon>
        <taxon>Rhabditomorpha</taxon>
        <taxon>Rhabditoidea</taxon>
        <taxon>Rhabditidae</taxon>
        <taxon>Peloderinae</taxon>
        <taxon>Caenorhabditis</taxon>
    </lineage>
</organism>
<reference evidence="6" key="1">
    <citation type="journal article" date="1998" name="Science">
        <title>Genome sequence of the nematode C. elegans: a platform for investigating biology.</title>
        <authorList>
            <consortium name="The C. elegans sequencing consortium"/>
        </authorList>
    </citation>
    <scope>NUCLEOTIDE SEQUENCE [LARGE SCALE GENOMIC DNA]</scope>
    <source>
        <strain evidence="6">Bristol N2</strain>
    </source>
</reference>
<reference evidence="5" key="2">
    <citation type="journal article" date="2017" name="PeerJ">
        <title>The nematode homologue of Mediator complex subunit 28, F28F8.5, is a critical regulator of C. elegans development.</title>
        <authorList>
            <person name="Kostrouchova M."/>
            <person name="Kostrouch D."/>
            <person name="Chughtai A.A."/>
            <person name="Kassak F."/>
            <person name="Novotny J.P."/>
            <person name="Kostrouchova V."/>
            <person name="Benda A."/>
            <person name="Krause M.W."/>
            <person name="Saudek V."/>
            <person name="Kostrouchova M."/>
            <person name="Kostrouch Z."/>
        </authorList>
    </citation>
    <scope>FUNCTION</scope>
    <scope>INTERACTION WITH MDT-6 AND MDT-30</scope>
    <scope>SUBCELLULAR LOCATION</scope>
    <scope>TISSUE SPECIFICITY</scope>
    <scope>DEVELOPMENTAL STAGE</scope>
    <scope>DISRUPTION PHENOTYPE</scope>
</reference>
<accession>H9G301</accession>
<accession>O18692</accession>
<comment type="function">
    <text evidence="3">Plays a role in normal growth and development.</text>
</comment>
<comment type="subunit">
    <text evidence="3">Interacts with mdt-6 and mdt-30.</text>
</comment>
<comment type="subcellular location">
    <subcellularLocation>
        <location evidence="3">Nucleus</location>
    </subcellularLocation>
    <subcellularLocation>
        <location evidence="3">Cytoplasm</location>
    </subcellularLocation>
    <text evidence="3">Mainly localizes to the nucleus.</text>
</comment>
<comment type="alternative products">
    <event type="alternative splicing"/>
    <isoform>
        <id>H9G301-1</id>
        <name evidence="8">b</name>
        <sequence type="displayed"/>
    </isoform>
    <isoform>
        <id>H9G301-2</id>
        <name evidence="7">a</name>
        <sequence type="described" ref="VSP_059205"/>
    </isoform>
</comment>
<comment type="tissue specificity">
    <text evidence="3">Ubiquitously expressed in tissues including epidermal, intestinal, pharyngeal and uterine, and is also expressed in vulval muscle cells and gut granules.</text>
</comment>
<comment type="developmental stage">
    <text evidence="3">Expressed from embryos to adults. Expressed in embryos from the two-fold stage, and is ubiquitously expressed during embryonic and larval stages of development.</text>
</comment>
<comment type="disruption phenotype">
    <text evidence="3">Viable, but sterile with defective development that is prominent during the late larval stages of development. The developmental defects include a squat body stature referred to as a dumpy phenotype, irregular gut, defective gonadal growth, with incomplete gonad development in some animals, a protruding vulva phenotype, defective uterus and spermatheca formation, and excretory canal defects. RNAi-mediated knockdown results in 44% of animals arresting at either the embryonic or larval stage of development, and in a range of phenotypes including defective molting, protruding vulvae that burst, male tail ray defects and uncoordinated movement.</text>
</comment>
<comment type="caution">
    <text evidence="5">Described as a member of the Mediator complex and a probable MED28 ortholog but shows very low similarity to known MED28 proteins and lacks the Pfam Med28 signature found in known MED28 proteins.</text>
</comment>
<protein>
    <recommendedName>
        <fullName evidence="5">Coiled-coil domain-containing protein mdt-28</fullName>
    </recommendedName>
</protein>
<name>MDT28_CAEEL</name>
<evidence type="ECO:0000255" key="1"/>
<evidence type="ECO:0000256" key="2">
    <source>
        <dbReference type="SAM" id="MobiDB-lite"/>
    </source>
</evidence>
<evidence type="ECO:0000269" key="3">
    <source>
    </source>
</evidence>
<evidence type="ECO:0000303" key="4">
    <source>
    </source>
</evidence>
<evidence type="ECO:0000305" key="5"/>
<evidence type="ECO:0000312" key="6">
    <source>
        <dbReference type="Proteomes" id="UP000001940"/>
    </source>
</evidence>
<evidence type="ECO:0000312" key="7">
    <source>
        <dbReference type="WormBase" id="F28F8.5a"/>
    </source>
</evidence>
<evidence type="ECO:0000312" key="8">
    <source>
        <dbReference type="WormBase" id="F28F8.5b"/>
    </source>
</evidence>
<gene>
    <name evidence="4 8" type="primary">mdt-28</name>
    <name evidence="8" type="ORF">F28F8.5</name>
</gene>
<keyword id="KW-0025">Alternative splicing</keyword>
<keyword id="KW-0175">Coiled coil</keyword>
<keyword id="KW-0963">Cytoplasm</keyword>
<keyword id="KW-0539">Nucleus</keyword>
<keyword id="KW-1185">Reference proteome</keyword>
<sequence length="202" mass="22501">MFEELDAEDGGEEQEMPMNVPEFGGGGEDIDDILGDAPDLPDDEYSNSVPQGAADGSIENDERRMRNDGAGSTNEDDEEPIEPTYLGDAIDSLMMHWCQLLTNVSVKAPVPPPSTLNHVKEVAEVCSKHFRDASVDVNNEFTRLGVQWEMEQPYSQYAIEEENLDEAIERQETIIAAAREMLNSRIQIYNEAHPNAGKHFTT</sequence>